<accession>A5A8Y8</accession>
<reference key="1">
    <citation type="submission" date="2007-05" db="EMBL/GenBank/DDBJ databases">
        <authorList>
            <consortium name="The pig genome sequencing consortium"/>
        </authorList>
    </citation>
    <scope>NUCLEOTIDE SEQUENCE [LARGE SCALE GENOMIC DNA]</scope>
</reference>
<name>EGFL8_PIG</name>
<proteinExistence type="inferred from homology"/>
<organism>
    <name type="scientific">Sus scrofa</name>
    <name type="common">Pig</name>
    <dbReference type="NCBI Taxonomy" id="9823"/>
    <lineage>
        <taxon>Eukaryota</taxon>
        <taxon>Metazoa</taxon>
        <taxon>Chordata</taxon>
        <taxon>Craniata</taxon>
        <taxon>Vertebrata</taxon>
        <taxon>Euteleostomi</taxon>
        <taxon>Mammalia</taxon>
        <taxon>Eutheria</taxon>
        <taxon>Laurasiatheria</taxon>
        <taxon>Artiodactyla</taxon>
        <taxon>Suina</taxon>
        <taxon>Suidae</taxon>
        <taxon>Sus</taxon>
    </lineage>
</organism>
<keyword id="KW-0106">Calcium</keyword>
<keyword id="KW-0175">Coiled coil</keyword>
<keyword id="KW-1015">Disulfide bond</keyword>
<keyword id="KW-0245">EGF-like domain</keyword>
<keyword id="KW-0325">Glycoprotein</keyword>
<keyword id="KW-1185">Reference proteome</keyword>
<keyword id="KW-0677">Repeat</keyword>
<keyword id="KW-0964">Secreted</keyword>
<keyword id="KW-0732">Signal</keyword>
<protein>
    <recommendedName>
        <fullName>Epidermal growth factor-like protein 8</fullName>
        <shortName>EGF-like protein 8</shortName>
    </recommendedName>
</protein>
<evidence type="ECO:0000250" key="1"/>
<evidence type="ECO:0000255" key="2"/>
<evidence type="ECO:0000255" key="3">
    <source>
        <dbReference type="PROSITE-ProRule" id="PRU00076"/>
    </source>
</evidence>
<evidence type="ECO:0000255" key="4">
    <source>
        <dbReference type="PROSITE-ProRule" id="PRU00384"/>
    </source>
</evidence>
<evidence type="ECO:0000305" key="5"/>
<dbReference type="EMBL" id="AL773562">
    <property type="protein sequence ID" value="CAN13271.1"/>
    <property type="molecule type" value="Genomic_DNA"/>
</dbReference>
<dbReference type="RefSeq" id="NP_001116583.1">
    <property type="nucleotide sequence ID" value="NM_001123111.1"/>
</dbReference>
<dbReference type="FunCoup" id="A5A8Y8">
    <property type="interactions" value="303"/>
</dbReference>
<dbReference type="STRING" id="9823.ENSSSCP00000001540"/>
<dbReference type="GlyCosmos" id="A5A8Y8">
    <property type="glycosylation" value="1 site, No reported glycans"/>
</dbReference>
<dbReference type="GlyGen" id="A5A8Y8">
    <property type="glycosylation" value="1 site"/>
</dbReference>
<dbReference type="PaxDb" id="9823-ENSSSCP00000001540"/>
<dbReference type="Ensembl" id="ENSSSCT00000001582.5">
    <property type="protein sequence ID" value="ENSSSCP00000001540.1"/>
    <property type="gene ID" value="ENSSSCG00000001434.6"/>
</dbReference>
<dbReference type="Ensembl" id="ENSSSCT00015108589.1">
    <property type="protein sequence ID" value="ENSSSCP00015046075.1"/>
    <property type="gene ID" value="ENSSSCG00015079914.1"/>
</dbReference>
<dbReference type="Ensembl" id="ENSSSCT00025079401.1">
    <property type="protein sequence ID" value="ENSSSCP00025034468.1"/>
    <property type="gene ID" value="ENSSSCG00025057995.1"/>
</dbReference>
<dbReference type="Ensembl" id="ENSSSCT00030068490.1">
    <property type="protein sequence ID" value="ENSSSCP00030031291.1"/>
    <property type="gene ID" value="ENSSSCG00030049076.1"/>
</dbReference>
<dbReference type="Ensembl" id="ENSSSCT00035081292.1">
    <property type="protein sequence ID" value="ENSSSCP00035033607.1"/>
    <property type="gene ID" value="ENSSSCG00035060571.1"/>
</dbReference>
<dbReference type="Ensembl" id="ENSSSCT00040071342.1">
    <property type="protein sequence ID" value="ENSSSCP00040030434.1"/>
    <property type="gene ID" value="ENSSSCG00040052768.1"/>
</dbReference>
<dbReference type="Ensembl" id="ENSSSCT00045063802.1">
    <property type="protein sequence ID" value="ENSSSCP00045045025.1"/>
    <property type="gene ID" value="ENSSSCG00045036962.1"/>
</dbReference>
<dbReference type="Ensembl" id="ENSSSCT00050024649.1">
    <property type="protein sequence ID" value="ENSSSCP00050010311.1"/>
    <property type="gene ID" value="ENSSSCG00050018157.1"/>
</dbReference>
<dbReference type="Ensembl" id="ENSSSCT00065042003.1">
    <property type="protein sequence ID" value="ENSSSCP00065017811.1"/>
    <property type="gene ID" value="ENSSSCG00065031047.1"/>
</dbReference>
<dbReference type="Ensembl" id="ENSSSCT00070045115.1">
    <property type="protein sequence ID" value="ENSSSCP00070038012.1"/>
    <property type="gene ID" value="ENSSSCG00070022692.1"/>
</dbReference>
<dbReference type="Ensembl" id="ENSSSCT00085021090">
    <property type="protein sequence ID" value="ENSSSCP00085014561"/>
    <property type="gene ID" value="ENSSSCG00085011273"/>
</dbReference>
<dbReference type="Ensembl" id="ENSSSCT00090030650">
    <property type="protein sequence ID" value="ENSSSCP00090019036"/>
    <property type="gene ID" value="ENSSSCG00090017358"/>
</dbReference>
<dbReference type="Ensembl" id="ENSSSCT00105049583">
    <property type="protein sequence ID" value="ENSSSCP00105034916"/>
    <property type="gene ID" value="ENSSSCG00105026099"/>
</dbReference>
<dbReference type="Ensembl" id="ENSSSCT00110049435">
    <property type="protein sequence ID" value="ENSSSCP00110034783"/>
    <property type="gene ID" value="ENSSSCG00110025636"/>
</dbReference>
<dbReference type="Ensembl" id="ENSSSCT00115013548">
    <property type="protein sequence ID" value="ENSSSCP00115012804"/>
    <property type="gene ID" value="ENSSSCG00115007757"/>
</dbReference>
<dbReference type="GeneID" id="100144521"/>
<dbReference type="KEGG" id="ssc:100144521"/>
<dbReference type="CTD" id="80864"/>
<dbReference type="VGNC" id="VGNC:87585">
    <property type="gene designation" value="EGFL8"/>
</dbReference>
<dbReference type="eggNOG" id="KOG1217">
    <property type="taxonomic scope" value="Eukaryota"/>
</dbReference>
<dbReference type="GeneTree" id="ENSGT00940000162975"/>
<dbReference type="HOGENOM" id="CLU_083642_0_0_1"/>
<dbReference type="InParanoid" id="A5A8Y8"/>
<dbReference type="OMA" id="QPDQCEC"/>
<dbReference type="OrthoDB" id="155976at2759"/>
<dbReference type="TreeFam" id="TF331360"/>
<dbReference type="Proteomes" id="UP000008227">
    <property type="component" value="Chromosome 7"/>
</dbReference>
<dbReference type="Proteomes" id="UP000314985">
    <property type="component" value="Chromosome 7"/>
</dbReference>
<dbReference type="Proteomes" id="UP000694570">
    <property type="component" value="Unplaced"/>
</dbReference>
<dbReference type="Proteomes" id="UP000694571">
    <property type="component" value="Unplaced"/>
</dbReference>
<dbReference type="Proteomes" id="UP000694720">
    <property type="component" value="Unplaced"/>
</dbReference>
<dbReference type="Proteomes" id="UP000694722">
    <property type="component" value="Unplaced"/>
</dbReference>
<dbReference type="Proteomes" id="UP000694723">
    <property type="component" value="Unplaced"/>
</dbReference>
<dbReference type="Proteomes" id="UP000694724">
    <property type="component" value="Unplaced"/>
</dbReference>
<dbReference type="Proteomes" id="UP000694725">
    <property type="component" value="Unplaced"/>
</dbReference>
<dbReference type="Proteomes" id="UP000694726">
    <property type="component" value="Unplaced"/>
</dbReference>
<dbReference type="Proteomes" id="UP000694727">
    <property type="component" value="Unplaced"/>
</dbReference>
<dbReference type="Proteomes" id="UP000694728">
    <property type="component" value="Unplaced"/>
</dbReference>
<dbReference type="Bgee" id="ENSSSCG00000001434">
    <property type="expression patterns" value="Expressed in blood and 44 other cell types or tissues"/>
</dbReference>
<dbReference type="ExpressionAtlas" id="A5A8Y8">
    <property type="expression patterns" value="baseline and differential"/>
</dbReference>
<dbReference type="GO" id="GO:0009986">
    <property type="term" value="C:cell surface"/>
    <property type="evidence" value="ECO:0000318"/>
    <property type="project" value="GO_Central"/>
</dbReference>
<dbReference type="GO" id="GO:0005576">
    <property type="term" value="C:extracellular region"/>
    <property type="evidence" value="ECO:0000318"/>
    <property type="project" value="GO_Central"/>
</dbReference>
<dbReference type="GO" id="GO:0005509">
    <property type="term" value="F:calcium ion binding"/>
    <property type="evidence" value="ECO:0007669"/>
    <property type="project" value="InterPro"/>
</dbReference>
<dbReference type="GO" id="GO:0005102">
    <property type="term" value="F:signaling receptor binding"/>
    <property type="evidence" value="ECO:0000318"/>
    <property type="project" value="GO_Central"/>
</dbReference>
<dbReference type="GO" id="GO:0001570">
    <property type="term" value="P:vasculogenesis"/>
    <property type="evidence" value="ECO:0000318"/>
    <property type="project" value="GO_Central"/>
</dbReference>
<dbReference type="CDD" id="cd00054">
    <property type="entry name" value="EGF_CA"/>
    <property type="match status" value="1"/>
</dbReference>
<dbReference type="FunFam" id="2.10.25.10:FF:000394">
    <property type="entry name" value="Epidermal growth factor-like protein 8"/>
    <property type="match status" value="1"/>
</dbReference>
<dbReference type="FunFam" id="2.10.25.10:FF:000010">
    <property type="entry name" value="Pro-epidermal growth factor"/>
    <property type="match status" value="1"/>
</dbReference>
<dbReference type="Gene3D" id="2.10.25.10">
    <property type="entry name" value="Laminin"/>
    <property type="match status" value="2"/>
</dbReference>
<dbReference type="InterPro" id="IPR050969">
    <property type="entry name" value="Dev_Signal_Modulators"/>
</dbReference>
<dbReference type="InterPro" id="IPR001881">
    <property type="entry name" value="EGF-like_Ca-bd_dom"/>
</dbReference>
<dbReference type="InterPro" id="IPR000742">
    <property type="entry name" value="EGF-like_dom"/>
</dbReference>
<dbReference type="InterPro" id="IPR000152">
    <property type="entry name" value="EGF-type_Asp/Asn_hydroxyl_site"/>
</dbReference>
<dbReference type="InterPro" id="IPR018097">
    <property type="entry name" value="EGF_Ca-bd_CS"/>
</dbReference>
<dbReference type="InterPro" id="IPR011489">
    <property type="entry name" value="EMI_domain"/>
</dbReference>
<dbReference type="InterPro" id="IPR009030">
    <property type="entry name" value="Growth_fac_rcpt_cys_sf"/>
</dbReference>
<dbReference type="InterPro" id="IPR049883">
    <property type="entry name" value="NOTCH1_EGF-like"/>
</dbReference>
<dbReference type="PANTHER" id="PTHR14949">
    <property type="entry name" value="EGF-LIKE-DOMAIN, MULTIPLE 7, 8"/>
    <property type="match status" value="1"/>
</dbReference>
<dbReference type="PANTHER" id="PTHR14949:SF27">
    <property type="entry name" value="EPIDERMAL GROWTH FACTOR-LIKE PROTEIN 8"/>
    <property type="match status" value="1"/>
</dbReference>
<dbReference type="Pfam" id="PF00008">
    <property type="entry name" value="EGF"/>
    <property type="match status" value="1"/>
</dbReference>
<dbReference type="Pfam" id="PF07645">
    <property type="entry name" value="EGF_CA"/>
    <property type="match status" value="1"/>
</dbReference>
<dbReference type="Pfam" id="PF07546">
    <property type="entry name" value="EMI"/>
    <property type="match status" value="1"/>
</dbReference>
<dbReference type="SMART" id="SM00181">
    <property type="entry name" value="EGF"/>
    <property type="match status" value="2"/>
</dbReference>
<dbReference type="SMART" id="SM00179">
    <property type="entry name" value="EGF_CA"/>
    <property type="match status" value="1"/>
</dbReference>
<dbReference type="SUPFAM" id="SSF57196">
    <property type="entry name" value="EGF/Laminin"/>
    <property type="match status" value="1"/>
</dbReference>
<dbReference type="SUPFAM" id="SSF57184">
    <property type="entry name" value="Growth factor receptor domain"/>
    <property type="match status" value="1"/>
</dbReference>
<dbReference type="PROSITE" id="PS00010">
    <property type="entry name" value="ASX_HYDROXYL"/>
    <property type="match status" value="1"/>
</dbReference>
<dbReference type="PROSITE" id="PS00022">
    <property type="entry name" value="EGF_1"/>
    <property type="match status" value="1"/>
</dbReference>
<dbReference type="PROSITE" id="PS01186">
    <property type="entry name" value="EGF_2"/>
    <property type="match status" value="1"/>
</dbReference>
<dbReference type="PROSITE" id="PS50026">
    <property type="entry name" value="EGF_3"/>
    <property type="match status" value="2"/>
</dbReference>
<dbReference type="PROSITE" id="PS01187">
    <property type="entry name" value="EGF_CA"/>
    <property type="match status" value="1"/>
</dbReference>
<dbReference type="PROSITE" id="PS51041">
    <property type="entry name" value="EMI"/>
    <property type="match status" value="1"/>
</dbReference>
<sequence length="295" mass="32402">MGSRAELHTLLGGLSFLLLLMSGQGAKGGSFKESQGVCSRQTLVVPLRYNESYSQPVYKPYLTLCPGRRVCSTYRTTYRVAWREVRREVQQTHAVCCQGWKKRHPGALTCDEAICAKPCQNGGVCVRPDQCECAPGWGGRHCHVDVDECRTGVTLCSHRCHNTAGSFTCGCPHGLVLGPDGRTCAEGASEPPTSASILSVAVREAGREDRALRREIRELRGRLERLEQWAGQAGAWVRAVLPMPPEELQPEQVAELWGRGDRIESLSDQVLLLEEKLGACSCEDNSLGPGLSRRR</sequence>
<gene>
    <name type="primary">EGFL8</name>
</gene>
<comment type="subcellular location">
    <subcellularLocation>
        <location evidence="5">Secreted</location>
    </subcellularLocation>
</comment>
<feature type="signal peptide" evidence="2">
    <location>
        <begin position="1"/>
        <end position="25"/>
    </location>
</feature>
<feature type="chain" id="PRO_0000294929" description="Epidermal growth factor-like protein 8">
    <location>
        <begin position="26"/>
        <end position="295"/>
    </location>
</feature>
<feature type="domain" description="EMI" evidence="4">
    <location>
        <begin position="34"/>
        <end position="112"/>
    </location>
</feature>
<feature type="domain" description="EGF-like 1" evidence="3">
    <location>
        <begin position="111"/>
        <end position="143"/>
    </location>
</feature>
<feature type="domain" description="EGF-like 2; calcium-binding" evidence="3">
    <location>
        <begin position="145"/>
        <end position="185"/>
    </location>
</feature>
<feature type="coiled-coil region" evidence="2">
    <location>
        <begin position="202"/>
        <end position="233"/>
    </location>
</feature>
<feature type="glycosylation site" description="N-linked (GlcNAc...) asparagine" evidence="2">
    <location>
        <position position="50"/>
    </location>
</feature>
<feature type="disulfide bond" evidence="2">
    <location>
        <begin position="38"/>
        <end position="97"/>
    </location>
</feature>
<feature type="disulfide bond" evidence="2">
    <location>
        <begin position="65"/>
        <end position="71"/>
    </location>
</feature>
<feature type="disulfide bond" evidence="2">
    <location>
        <begin position="96"/>
        <end position="110"/>
    </location>
</feature>
<feature type="disulfide bond" evidence="1">
    <location>
        <begin position="115"/>
        <end position="125"/>
    </location>
</feature>
<feature type="disulfide bond" evidence="1">
    <location>
        <begin position="119"/>
        <end position="131"/>
    </location>
</feature>
<feature type="disulfide bond" evidence="1">
    <location>
        <begin position="133"/>
        <end position="142"/>
    </location>
</feature>
<feature type="disulfide bond" evidence="1">
    <location>
        <begin position="149"/>
        <end position="160"/>
    </location>
</feature>
<feature type="disulfide bond" evidence="1">
    <location>
        <begin position="156"/>
        <end position="169"/>
    </location>
</feature>
<feature type="disulfide bond" evidence="1">
    <location>
        <begin position="171"/>
        <end position="184"/>
    </location>
</feature>